<evidence type="ECO:0000255" key="1">
    <source>
        <dbReference type="HAMAP-Rule" id="MF_00204"/>
    </source>
</evidence>
<reference key="1">
    <citation type="journal article" date="2003" name="Nature">
        <title>Genome divergence in two Prochlorococcus ecotypes reflects oceanic niche differentiation.</title>
        <authorList>
            <person name="Rocap G."/>
            <person name="Larimer F.W."/>
            <person name="Lamerdin J.E."/>
            <person name="Malfatti S."/>
            <person name="Chain P."/>
            <person name="Ahlgren N.A."/>
            <person name="Arellano A."/>
            <person name="Coleman M."/>
            <person name="Hauser L."/>
            <person name="Hess W.R."/>
            <person name="Johnson Z.I."/>
            <person name="Land M.L."/>
            <person name="Lindell D."/>
            <person name="Post A.F."/>
            <person name="Regala W."/>
            <person name="Shah M."/>
            <person name="Shaw S.L."/>
            <person name="Steglich C."/>
            <person name="Sullivan M.B."/>
            <person name="Ting C.S."/>
            <person name="Tolonen A."/>
            <person name="Webb E.A."/>
            <person name="Zinser E.R."/>
            <person name="Chisholm S.W."/>
        </authorList>
    </citation>
    <scope>NUCLEOTIDE SEQUENCE [LARGE SCALE GENOMIC DNA]</scope>
    <source>
        <strain>CCMP1986 / NIES-2087 / MED4</strain>
    </source>
</reference>
<dbReference type="EMBL" id="BX548174">
    <property type="protein sequence ID" value="CAE20108.1"/>
    <property type="molecule type" value="Genomic_DNA"/>
</dbReference>
<dbReference type="RefSeq" id="WP_011133276.1">
    <property type="nucleotide sequence ID" value="NC_005072.1"/>
</dbReference>
<dbReference type="SMR" id="Q7UZL3"/>
<dbReference type="STRING" id="59919.PMM1649"/>
<dbReference type="KEGG" id="pmm:PMM1649"/>
<dbReference type="eggNOG" id="COG0556">
    <property type="taxonomic scope" value="Bacteria"/>
</dbReference>
<dbReference type="HOGENOM" id="CLU_009621_2_1_3"/>
<dbReference type="OrthoDB" id="9806651at2"/>
<dbReference type="Proteomes" id="UP000001026">
    <property type="component" value="Chromosome"/>
</dbReference>
<dbReference type="GO" id="GO:0005737">
    <property type="term" value="C:cytoplasm"/>
    <property type="evidence" value="ECO:0007669"/>
    <property type="project" value="UniProtKB-SubCell"/>
</dbReference>
<dbReference type="GO" id="GO:0009380">
    <property type="term" value="C:excinuclease repair complex"/>
    <property type="evidence" value="ECO:0007669"/>
    <property type="project" value="InterPro"/>
</dbReference>
<dbReference type="GO" id="GO:0005524">
    <property type="term" value="F:ATP binding"/>
    <property type="evidence" value="ECO:0007669"/>
    <property type="project" value="UniProtKB-UniRule"/>
</dbReference>
<dbReference type="GO" id="GO:0016887">
    <property type="term" value="F:ATP hydrolysis activity"/>
    <property type="evidence" value="ECO:0007669"/>
    <property type="project" value="InterPro"/>
</dbReference>
<dbReference type="GO" id="GO:0003677">
    <property type="term" value="F:DNA binding"/>
    <property type="evidence" value="ECO:0007669"/>
    <property type="project" value="UniProtKB-UniRule"/>
</dbReference>
<dbReference type="GO" id="GO:0009381">
    <property type="term" value="F:excinuclease ABC activity"/>
    <property type="evidence" value="ECO:0007669"/>
    <property type="project" value="UniProtKB-UniRule"/>
</dbReference>
<dbReference type="GO" id="GO:0006289">
    <property type="term" value="P:nucleotide-excision repair"/>
    <property type="evidence" value="ECO:0007669"/>
    <property type="project" value="UniProtKB-UniRule"/>
</dbReference>
<dbReference type="GO" id="GO:0009432">
    <property type="term" value="P:SOS response"/>
    <property type="evidence" value="ECO:0007669"/>
    <property type="project" value="UniProtKB-UniRule"/>
</dbReference>
<dbReference type="CDD" id="cd17916">
    <property type="entry name" value="DEXHc_UvrB"/>
    <property type="match status" value="1"/>
</dbReference>
<dbReference type="CDD" id="cd18790">
    <property type="entry name" value="SF2_C_UvrB"/>
    <property type="match status" value="1"/>
</dbReference>
<dbReference type="Gene3D" id="3.40.50.300">
    <property type="entry name" value="P-loop containing nucleotide triphosphate hydrolases"/>
    <property type="match status" value="3"/>
</dbReference>
<dbReference type="Gene3D" id="4.10.860.10">
    <property type="entry name" value="UVR domain"/>
    <property type="match status" value="1"/>
</dbReference>
<dbReference type="HAMAP" id="MF_00204">
    <property type="entry name" value="UvrB"/>
    <property type="match status" value="1"/>
</dbReference>
<dbReference type="InterPro" id="IPR006935">
    <property type="entry name" value="Helicase/UvrB_N"/>
</dbReference>
<dbReference type="InterPro" id="IPR014001">
    <property type="entry name" value="Helicase_ATP-bd"/>
</dbReference>
<dbReference type="InterPro" id="IPR001650">
    <property type="entry name" value="Helicase_C-like"/>
</dbReference>
<dbReference type="InterPro" id="IPR027417">
    <property type="entry name" value="P-loop_NTPase"/>
</dbReference>
<dbReference type="InterPro" id="IPR001943">
    <property type="entry name" value="UVR_dom"/>
</dbReference>
<dbReference type="InterPro" id="IPR036876">
    <property type="entry name" value="UVR_dom_sf"/>
</dbReference>
<dbReference type="InterPro" id="IPR004807">
    <property type="entry name" value="UvrB"/>
</dbReference>
<dbReference type="InterPro" id="IPR041471">
    <property type="entry name" value="UvrB_inter"/>
</dbReference>
<dbReference type="InterPro" id="IPR024759">
    <property type="entry name" value="UvrB_YAD/RRR_dom"/>
</dbReference>
<dbReference type="NCBIfam" id="NF003673">
    <property type="entry name" value="PRK05298.1"/>
    <property type="match status" value="1"/>
</dbReference>
<dbReference type="NCBIfam" id="TIGR00631">
    <property type="entry name" value="uvrb"/>
    <property type="match status" value="1"/>
</dbReference>
<dbReference type="PANTHER" id="PTHR24029">
    <property type="entry name" value="UVRABC SYSTEM PROTEIN B"/>
    <property type="match status" value="1"/>
</dbReference>
<dbReference type="PANTHER" id="PTHR24029:SF0">
    <property type="entry name" value="UVRABC SYSTEM PROTEIN B"/>
    <property type="match status" value="1"/>
</dbReference>
<dbReference type="Pfam" id="PF00271">
    <property type="entry name" value="Helicase_C"/>
    <property type="match status" value="1"/>
</dbReference>
<dbReference type="Pfam" id="PF04851">
    <property type="entry name" value="ResIII"/>
    <property type="match status" value="1"/>
</dbReference>
<dbReference type="Pfam" id="PF02151">
    <property type="entry name" value="UVR"/>
    <property type="match status" value="1"/>
</dbReference>
<dbReference type="Pfam" id="PF12344">
    <property type="entry name" value="UvrB"/>
    <property type="match status" value="1"/>
</dbReference>
<dbReference type="Pfam" id="PF17757">
    <property type="entry name" value="UvrB_inter"/>
    <property type="match status" value="1"/>
</dbReference>
<dbReference type="SMART" id="SM00487">
    <property type="entry name" value="DEXDc"/>
    <property type="match status" value="1"/>
</dbReference>
<dbReference type="SMART" id="SM00490">
    <property type="entry name" value="HELICc"/>
    <property type="match status" value="1"/>
</dbReference>
<dbReference type="SUPFAM" id="SSF46600">
    <property type="entry name" value="C-terminal UvrC-binding domain of UvrB"/>
    <property type="match status" value="1"/>
</dbReference>
<dbReference type="SUPFAM" id="SSF52540">
    <property type="entry name" value="P-loop containing nucleoside triphosphate hydrolases"/>
    <property type="match status" value="2"/>
</dbReference>
<dbReference type="PROSITE" id="PS51192">
    <property type="entry name" value="HELICASE_ATP_BIND_1"/>
    <property type="match status" value="1"/>
</dbReference>
<dbReference type="PROSITE" id="PS51194">
    <property type="entry name" value="HELICASE_CTER"/>
    <property type="match status" value="1"/>
</dbReference>
<dbReference type="PROSITE" id="PS50151">
    <property type="entry name" value="UVR"/>
    <property type="match status" value="1"/>
</dbReference>
<name>UVRB_PROMP</name>
<keyword id="KW-0067">ATP-binding</keyword>
<keyword id="KW-0963">Cytoplasm</keyword>
<keyword id="KW-0227">DNA damage</keyword>
<keyword id="KW-0228">DNA excision</keyword>
<keyword id="KW-0234">DNA repair</keyword>
<keyword id="KW-0267">Excision nuclease</keyword>
<keyword id="KW-0547">Nucleotide-binding</keyword>
<keyword id="KW-0742">SOS response</keyword>
<comment type="function">
    <text evidence="1">The UvrABC repair system catalyzes the recognition and processing of DNA lesions. A damage recognition complex composed of 2 UvrA and 2 UvrB subunits scans DNA for abnormalities. Upon binding of the UvrA(2)B(2) complex to a putative damaged site, the DNA wraps around one UvrB monomer. DNA wrap is dependent on ATP binding by UvrB and probably causes local melting of the DNA helix, facilitating insertion of UvrB beta-hairpin between the DNA strands. Then UvrB probes one DNA strand for the presence of a lesion. If a lesion is found the UvrA subunits dissociate and the UvrB-DNA preincision complex is formed. This complex is subsequently bound by UvrC and the second UvrB is released. If no lesion is found, the DNA wraps around the other UvrB subunit that will check the other stand for damage.</text>
</comment>
<comment type="subunit">
    <text evidence="1">Forms a heterotetramer with UvrA during the search for lesions. Interacts with UvrC in an incision complex.</text>
</comment>
<comment type="subcellular location">
    <subcellularLocation>
        <location evidence="1">Cytoplasm</location>
    </subcellularLocation>
</comment>
<comment type="domain">
    <text evidence="1">The beta-hairpin motif is involved in DNA binding.</text>
</comment>
<comment type="similarity">
    <text evidence="1">Belongs to the UvrB family.</text>
</comment>
<proteinExistence type="inferred from homology"/>
<protein>
    <recommendedName>
        <fullName evidence="1">UvrABC system protein B</fullName>
        <shortName evidence="1">Protein UvrB</shortName>
    </recommendedName>
    <alternativeName>
        <fullName evidence="1">Excinuclease ABC subunit B</fullName>
    </alternativeName>
</protein>
<accession>Q7UZL3</accession>
<organism>
    <name type="scientific">Prochlorococcus marinus subsp. pastoris (strain CCMP1986 / NIES-2087 / MED4)</name>
    <dbReference type="NCBI Taxonomy" id="59919"/>
    <lineage>
        <taxon>Bacteria</taxon>
        <taxon>Bacillati</taxon>
        <taxon>Cyanobacteriota</taxon>
        <taxon>Cyanophyceae</taxon>
        <taxon>Synechococcales</taxon>
        <taxon>Prochlorococcaceae</taxon>
        <taxon>Prochlorococcus</taxon>
    </lineage>
</organism>
<feature type="chain" id="PRO_0000227344" description="UvrABC system protein B">
    <location>
        <begin position="1"/>
        <end position="679"/>
    </location>
</feature>
<feature type="domain" description="Helicase ATP-binding" evidence="1">
    <location>
        <begin position="25"/>
        <end position="412"/>
    </location>
</feature>
<feature type="domain" description="Helicase C-terminal" evidence="1">
    <location>
        <begin position="429"/>
        <end position="583"/>
    </location>
</feature>
<feature type="domain" description="UVR" evidence="1">
    <location>
        <begin position="639"/>
        <end position="674"/>
    </location>
</feature>
<feature type="short sequence motif" description="Beta-hairpin">
    <location>
        <begin position="91"/>
        <end position="114"/>
    </location>
</feature>
<feature type="binding site" evidence="1">
    <location>
        <begin position="38"/>
        <end position="45"/>
    </location>
    <ligand>
        <name>ATP</name>
        <dbReference type="ChEBI" id="CHEBI:30616"/>
    </ligand>
</feature>
<sequence length="679" mass="77247">MNNYKLQAPYQPNGDQPKAIKKLVQGVNSGEEFQTLLGATGTGKTFTIANVIQQTGRPALILAHNKTLAAQLCNELRQFFPKNAVEYFISYYDYYQPEAYVPVSDTYIAKTASINEEIDMLRHSATRSLFERKDVIVVASISCIYGLGIPSEYLKAAVKFAVGESIDLRSSLRALVDNQYTRNDTEITRGRFRIKGDVLEIGPAYEDRLIRIELFGDEIEAIRFVDPLTGEILESLDQVSVYPAKHFVTPKERLDSAISAIRNELKEQLDKFAYEGKLLEAQRLEQRTKYDLEMLREVGYCNGVENYARHLAGREEGTPPECLIDYFPKDWLLVVDESHVTCPQLHAMYNGDQARKKVLIDHGFRLPSAADNRPLKCEEFWEKSRQTLFISATPGQWELDQCEGKFIEQVIRPTGVLDPIIDVRPSDGQIDDLLSEIRVRAKKNQRVLVTTLTKRMAEDLTDFLSDNKVRVRYLHSEIHSIERIEIIQDLRLGEYDVLVGVNLLREGLDLPEVSLVAILDADKEGFLRAERSLIQTIGRAARHVEGVALLYADNFTESMKRAISETDRRRTIQKKYNQINGITPKPAGKKIENSILSFLELSRKLDTGGLSKDLINIVSNKTDDILNAKDNQCLLDEMPSLIDKLENKMKDAAKELNFEEAANLRDRIKKLRQKLSRNT</sequence>
<gene>
    <name evidence="1" type="primary">uvrB</name>
    <name type="ordered locus">PMM1649</name>
</gene>